<protein>
    <recommendedName>
        <fullName evidence="1">Methylthioribulose-1-phosphate dehydratase</fullName>
        <shortName evidence="1">MTRu-1-P dehydratase</shortName>
        <ecNumber evidence="1">4.2.1.109</ecNumber>
    </recommendedName>
</protein>
<accession>A1TZ34</accession>
<dbReference type="EC" id="4.2.1.109" evidence="1"/>
<dbReference type="EMBL" id="CP000514">
    <property type="protein sequence ID" value="ABM18003.1"/>
    <property type="molecule type" value="Genomic_DNA"/>
</dbReference>
<dbReference type="RefSeq" id="WP_011784423.1">
    <property type="nucleotide sequence ID" value="NC_008740.1"/>
</dbReference>
<dbReference type="SMR" id="A1TZ34"/>
<dbReference type="STRING" id="351348.Maqu_0907"/>
<dbReference type="KEGG" id="maq:Maqu_0907"/>
<dbReference type="eggNOG" id="COG0235">
    <property type="taxonomic scope" value="Bacteria"/>
</dbReference>
<dbReference type="HOGENOM" id="CLU_006033_4_1_6"/>
<dbReference type="OrthoDB" id="9805559at2"/>
<dbReference type="UniPathway" id="UPA00904">
    <property type="reaction ID" value="UER00875"/>
</dbReference>
<dbReference type="Proteomes" id="UP000000998">
    <property type="component" value="Chromosome"/>
</dbReference>
<dbReference type="GO" id="GO:0005737">
    <property type="term" value="C:cytoplasm"/>
    <property type="evidence" value="ECO:0007669"/>
    <property type="project" value="InterPro"/>
</dbReference>
<dbReference type="GO" id="GO:0046570">
    <property type="term" value="F:methylthioribulose 1-phosphate dehydratase activity"/>
    <property type="evidence" value="ECO:0007669"/>
    <property type="project" value="UniProtKB-UniRule"/>
</dbReference>
<dbReference type="GO" id="GO:0008270">
    <property type="term" value="F:zinc ion binding"/>
    <property type="evidence" value="ECO:0007669"/>
    <property type="project" value="UniProtKB-UniRule"/>
</dbReference>
<dbReference type="GO" id="GO:0019509">
    <property type="term" value="P:L-methionine salvage from methylthioadenosine"/>
    <property type="evidence" value="ECO:0007669"/>
    <property type="project" value="UniProtKB-UniRule"/>
</dbReference>
<dbReference type="GO" id="GO:0005996">
    <property type="term" value="P:monosaccharide metabolic process"/>
    <property type="evidence" value="ECO:0007669"/>
    <property type="project" value="UniProtKB-ARBA"/>
</dbReference>
<dbReference type="Gene3D" id="3.40.225.10">
    <property type="entry name" value="Class II aldolase/adducin N-terminal domain"/>
    <property type="match status" value="1"/>
</dbReference>
<dbReference type="HAMAP" id="MF_01677">
    <property type="entry name" value="Salvage_MtnB"/>
    <property type="match status" value="1"/>
</dbReference>
<dbReference type="InterPro" id="IPR001303">
    <property type="entry name" value="Aldolase_II/adducin_N"/>
</dbReference>
<dbReference type="InterPro" id="IPR036409">
    <property type="entry name" value="Aldolase_II/adducin_N_sf"/>
</dbReference>
<dbReference type="InterPro" id="IPR017714">
    <property type="entry name" value="MethylthioRu-1-P_deHdtase_MtnB"/>
</dbReference>
<dbReference type="NCBIfam" id="NF006672">
    <property type="entry name" value="PRK09220.1"/>
    <property type="match status" value="1"/>
</dbReference>
<dbReference type="NCBIfam" id="TIGR03328">
    <property type="entry name" value="salvage_mtnB"/>
    <property type="match status" value="1"/>
</dbReference>
<dbReference type="PANTHER" id="PTHR10640">
    <property type="entry name" value="METHYLTHIORIBULOSE-1-PHOSPHATE DEHYDRATASE"/>
    <property type="match status" value="1"/>
</dbReference>
<dbReference type="PANTHER" id="PTHR10640:SF7">
    <property type="entry name" value="METHYLTHIORIBULOSE-1-PHOSPHATE DEHYDRATASE"/>
    <property type="match status" value="1"/>
</dbReference>
<dbReference type="Pfam" id="PF00596">
    <property type="entry name" value="Aldolase_II"/>
    <property type="match status" value="1"/>
</dbReference>
<dbReference type="SMART" id="SM01007">
    <property type="entry name" value="Aldolase_II"/>
    <property type="match status" value="1"/>
</dbReference>
<dbReference type="SUPFAM" id="SSF53639">
    <property type="entry name" value="AraD/HMP-PK domain-like"/>
    <property type="match status" value="1"/>
</dbReference>
<evidence type="ECO:0000255" key="1">
    <source>
        <dbReference type="HAMAP-Rule" id="MF_01677"/>
    </source>
</evidence>
<feature type="chain" id="PRO_0000357092" description="Methylthioribulose-1-phosphate dehydratase">
    <location>
        <begin position="1"/>
        <end position="208"/>
    </location>
</feature>
<feature type="binding site" evidence="1">
    <location>
        <position position="98"/>
    </location>
    <ligand>
        <name>Zn(2+)</name>
        <dbReference type="ChEBI" id="CHEBI:29105"/>
    </ligand>
</feature>
<feature type="binding site" evidence="1">
    <location>
        <position position="100"/>
    </location>
    <ligand>
        <name>Zn(2+)</name>
        <dbReference type="ChEBI" id="CHEBI:29105"/>
    </ligand>
</feature>
<name>MTNB_MARN8</name>
<sequence length="208" mass="23259">MFDVTRYATAAQSIVEAGRFLYERGWSPATSSNYSARIDGDHVAITVSGRHKGQLGAGDVMVVDLHGQAVQSDCRSSAETLLHTVIYQLYPEVGAVLHTHSVKATVLSRLIPAGQALELEGYELQKAFNGVQTHEGKLIVPVFDNTQDIPALAEETRDWFARHPEQPGYLIRGHGLYTWGRTMADCLRHIEAFEFLFECELETMRVRR</sequence>
<proteinExistence type="inferred from homology"/>
<organism>
    <name type="scientific">Marinobacter nauticus (strain ATCC 700491 / DSM 11845 / VT8)</name>
    <name type="common">Marinobacter aquaeolei</name>
    <dbReference type="NCBI Taxonomy" id="351348"/>
    <lineage>
        <taxon>Bacteria</taxon>
        <taxon>Pseudomonadati</taxon>
        <taxon>Pseudomonadota</taxon>
        <taxon>Gammaproteobacteria</taxon>
        <taxon>Pseudomonadales</taxon>
        <taxon>Marinobacteraceae</taxon>
        <taxon>Marinobacter</taxon>
    </lineage>
</organism>
<reference key="1">
    <citation type="journal article" date="2011" name="Appl. Environ. Microbiol.">
        <title>Genomic potential of Marinobacter aquaeolei, a biogeochemical 'opportunitroph'.</title>
        <authorList>
            <person name="Singer E."/>
            <person name="Webb E.A."/>
            <person name="Nelson W.C."/>
            <person name="Heidelberg J.F."/>
            <person name="Ivanova N."/>
            <person name="Pati A."/>
            <person name="Edwards K.J."/>
        </authorList>
    </citation>
    <scope>NUCLEOTIDE SEQUENCE [LARGE SCALE GENOMIC DNA]</scope>
    <source>
        <strain>ATCC 700491 / DSM 11845 / VT8</strain>
    </source>
</reference>
<keyword id="KW-0028">Amino-acid biosynthesis</keyword>
<keyword id="KW-0456">Lyase</keyword>
<keyword id="KW-0479">Metal-binding</keyword>
<keyword id="KW-0486">Methionine biosynthesis</keyword>
<keyword id="KW-0862">Zinc</keyword>
<comment type="function">
    <text evidence="1">Catalyzes the dehydration of methylthioribulose-1-phosphate (MTRu-1-P) into 2,3-diketo-5-methylthiopentyl-1-phosphate (DK-MTP-1-P).</text>
</comment>
<comment type="catalytic activity">
    <reaction evidence="1">
        <text>5-(methylsulfanyl)-D-ribulose 1-phosphate = 5-methylsulfanyl-2,3-dioxopentyl phosphate + H2O</text>
        <dbReference type="Rhea" id="RHEA:15549"/>
        <dbReference type="ChEBI" id="CHEBI:15377"/>
        <dbReference type="ChEBI" id="CHEBI:58548"/>
        <dbReference type="ChEBI" id="CHEBI:58828"/>
        <dbReference type="EC" id="4.2.1.109"/>
    </reaction>
</comment>
<comment type="cofactor">
    <cofactor evidence="1">
        <name>Zn(2+)</name>
        <dbReference type="ChEBI" id="CHEBI:29105"/>
    </cofactor>
    <text evidence="1">Binds 1 zinc ion per subunit.</text>
</comment>
<comment type="pathway">
    <text evidence="1">Amino-acid biosynthesis; L-methionine biosynthesis via salvage pathway; L-methionine from S-methyl-5-thio-alpha-D-ribose 1-phosphate: step 2/6.</text>
</comment>
<comment type="similarity">
    <text evidence="1">Belongs to the aldolase class II family. MtnB subfamily.</text>
</comment>
<gene>
    <name evidence="1" type="primary">mtnB</name>
    <name type="ordered locus">Maqu_0907</name>
</gene>